<accession>Q47JA5</accession>
<gene>
    <name evidence="2" type="primary">tuf1</name>
    <name type="ordered locus">Daro_0305</name>
</gene>
<gene>
    <name evidence="2" type="primary">tuf2</name>
    <name type="ordered locus">Daro_0317</name>
</gene>
<sequence length="396" mass="43161">MAKEKFARTKPHVNVGTIGHVDHGKTTLTAAITTVLSAKFGGAAKKYDEIDAAPEEKARGITINTAHVEYETANRHYAHVDCPGHADYVKNMITGAAQMDGAILVCSAADGPMPQTREHILLARQVGVPYVLVFMNKCDMVDDAELLELVEMELRELLSKYDFPGDDTPIIHGSALKALEGDQSEIGEPSIFRLADALDSYIPDPERAIDQPFLMPVEDVFSISGRGTVVTGRVERGIVKVGEEIEIVGIRPTVKTICTGVEMFRKLLDQGQAGDNIGALLRGTKREDVERGQVLCKPGSVKPHTHFTSEVYILSKDEGGRHTPFFNGYRPQFYFRTTDVTGSIELPEGTEMVMPGDNIAMTIKLIAPIAMEEGLRFAIREGGRTVGAGVVAKIIE</sequence>
<comment type="function">
    <text evidence="2">GTP hydrolase that promotes the GTP-dependent binding of aminoacyl-tRNA to the A-site of ribosomes during protein biosynthesis.</text>
</comment>
<comment type="catalytic activity">
    <reaction evidence="2">
        <text>GTP + H2O = GDP + phosphate + H(+)</text>
        <dbReference type="Rhea" id="RHEA:19669"/>
        <dbReference type="ChEBI" id="CHEBI:15377"/>
        <dbReference type="ChEBI" id="CHEBI:15378"/>
        <dbReference type="ChEBI" id="CHEBI:37565"/>
        <dbReference type="ChEBI" id="CHEBI:43474"/>
        <dbReference type="ChEBI" id="CHEBI:58189"/>
        <dbReference type="EC" id="3.6.5.3"/>
    </reaction>
    <physiologicalReaction direction="left-to-right" evidence="2">
        <dbReference type="Rhea" id="RHEA:19670"/>
    </physiologicalReaction>
</comment>
<comment type="subunit">
    <text evidence="2">Monomer.</text>
</comment>
<comment type="subcellular location">
    <subcellularLocation>
        <location evidence="2">Cytoplasm</location>
    </subcellularLocation>
</comment>
<comment type="similarity">
    <text evidence="2">Belongs to the TRAFAC class translation factor GTPase superfamily. Classic translation factor GTPase family. EF-Tu/EF-1A subfamily.</text>
</comment>
<name>EFTU_DECAR</name>
<feature type="chain" id="PRO_0000337369" description="Elongation factor Tu">
    <location>
        <begin position="1"/>
        <end position="396"/>
    </location>
</feature>
<feature type="domain" description="tr-type G">
    <location>
        <begin position="10"/>
        <end position="206"/>
    </location>
</feature>
<feature type="region of interest" description="G1" evidence="1">
    <location>
        <begin position="19"/>
        <end position="26"/>
    </location>
</feature>
<feature type="region of interest" description="G2" evidence="1">
    <location>
        <begin position="60"/>
        <end position="64"/>
    </location>
</feature>
<feature type="region of interest" description="G3" evidence="1">
    <location>
        <begin position="81"/>
        <end position="84"/>
    </location>
</feature>
<feature type="region of interest" description="G4" evidence="1">
    <location>
        <begin position="136"/>
        <end position="139"/>
    </location>
</feature>
<feature type="region of interest" description="G5" evidence="1">
    <location>
        <begin position="174"/>
        <end position="176"/>
    </location>
</feature>
<feature type="binding site" evidence="2">
    <location>
        <begin position="19"/>
        <end position="26"/>
    </location>
    <ligand>
        <name>GTP</name>
        <dbReference type="ChEBI" id="CHEBI:37565"/>
    </ligand>
</feature>
<feature type="binding site" evidence="2">
    <location>
        <position position="26"/>
    </location>
    <ligand>
        <name>Mg(2+)</name>
        <dbReference type="ChEBI" id="CHEBI:18420"/>
    </ligand>
</feature>
<feature type="binding site" evidence="2">
    <location>
        <begin position="81"/>
        <end position="85"/>
    </location>
    <ligand>
        <name>GTP</name>
        <dbReference type="ChEBI" id="CHEBI:37565"/>
    </ligand>
</feature>
<feature type="binding site" evidence="2">
    <location>
        <begin position="136"/>
        <end position="139"/>
    </location>
    <ligand>
        <name>GTP</name>
        <dbReference type="ChEBI" id="CHEBI:37565"/>
    </ligand>
</feature>
<protein>
    <recommendedName>
        <fullName evidence="2">Elongation factor Tu</fullName>
        <shortName evidence="2">EF-Tu</shortName>
        <ecNumber evidence="2">3.6.5.3</ecNumber>
    </recommendedName>
</protein>
<dbReference type="EC" id="3.6.5.3" evidence="2"/>
<dbReference type="EMBL" id="CP000089">
    <property type="protein sequence ID" value="AAZ45064.1"/>
    <property type="molecule type" value="Genomic_DNA"/>
</dbReference>
<dbReference type="EMBL" id="CP000089">
    <property type="protein sequence ID" value="AAZ45076.1"/>
    <property type="molecule type" value="Genomic_DNA"/>
</dbReference>
<dbReference type="SMR" id="Q47JA5"/>
<dbReference type="STRING" id="159087.Daro_0305"/>
<dbReference type="KEGG" id="dar:Daro_0305"/>
<dbReference type="KEGG" id="dar:Daro_0317"/>
<dbReference type="eggNOG" id="COG0050">
    <property type="taxonomic scope" value="Bacteria"/>
</dbReference>
<dbReference type="HOGENOM" id="CLU_007265_0_0_4"/>
<dbReference type="OrthoDB" id="9803139at2"/>
<dbReference type="GO" id="GO:0005829">
    <property type="term" value="C:cytosol"/>
    <property type="evidence" value="ECO:0007669"/>
    <property type="project" value="TreeGrafter"/>
</dbReference>
<dbReference type="GO" id="GO:0005525">
    <property type="term" value="F:GTP binding"/>
    <property type="evidence" value="ECO:0007669"/>
    <property type="project" value="UniProtKB-UniRule"/>
</dbReference>
<dbReference type="GO" id="GO:0003924">
    <property type="term" value="F:GTPase activity"/>
    <property type="evidence" value="ECO:0007669"/>
    <property type="project" value="InterPro"/>
</dbReference>
<dbReference type="GO" id="GO:0097216">
    <property type="term" value="F:guanosine tetraphosphate binding"/>
    <property type="evidence" value="ECO:0007669"/>
    <property type="project" value="UniProtKB-ARBA"/>
</dbReference>
<dbReference type="GO" id="GO:0003746">
    <property type="term" value="F:translation elongation factor activity"/>
    <property type="evidence" value="ECO:0007669"/>
    <property type="project" value="UniProtKB-UniRule"/>
</dbReference>
<dbReference type="CDD" id="cd01884">
    <property type="entry name" value="EF_Tu"/>
    <property type="match status" value="1"/>
</dbReference>
<dbReference type="CDD" id="cd03697">
    <property type="entry name" value="EFTU_II"/>
    <property type="match status" value="1"/>
</dbReference>
<dbReference type="CDD" id="cd03707">
    <property type="entry name" value="EFTU_III"/>
    <property type="match status" value="1"/>
</dbReference>
<dbReference type="FunFam" id="2.40.30.10:FF:000001">
    <property type="entry name" value="Elongation factor Tu"/>
    <property type="match status" value="1"/>
</dbReference>
<dbReference type="FunFam" id="3.40.50.300:FF:000003">
    <property type="entry name" value="Elongation factor Tu"/>
    <property type="match status" value="1"/>
</dbReference>
<dbReference type="Gene3D" id="3.40.50.300">
    <property type="entry name" value="P-loop containing nucleotide triphosphate hydrolases"/>
    <property type="match status" value="1"/>
</dbReference>
<dbReference type="Gene3D" id="2.40.30.10">
    <property type="entry name" value="Translation factors"/>
    <property type="match status" value="2"/>
</dbReference>
<dbReference type="HAMAP" id="MF_00118_B">
    <property type="entry name" value="EF_Tu_B"/>
    <property type="match status" value="1"/>
</dbReference>
<dbReference type="InterPro" id="IPR041709">
    <property type="entry name" value="EF-Tu_GTP-bd"/>
</dbReference>
<dbReference type="InterPro" id="IPR050055">
    <property type="entry name" value="EF-Tu_GTPase"/>
</dbReference>
<dbReference type="InterPro" id="IPR004161">
    <property type="entry name" value="EFTu-like_2"/>
</dbReference>
<dbReference type="InterPro" id="IPR033720">
    <property type="entry name" value="EFTU_2"/>
</dbReference>
<dbReference type="InterPro" id="IPR031157">
    <property type="entry name" value="G_TR_CS"/>
</dbReference>
<dbReference type="InterPro" id="IPR027417">
    <property type="entry name" value="P-loop_NTPase"/>
</dbReference>
<dbReference type="InterPro" id="IPR005225">
    <property type="entry name" value="Small_GTP-bd"/>
</dbReference>
<dbReference type="InterPro" id="IPR000795">
    <property type="entry name" value="T_Tr_GTP-bd_dom"/>
</dbReference>
<dbReference type="InterPro" id="IPR009000">
    <property type="entry name" value="Transl_B-barrel_sf"/>
</dbReference>
<dbReference type="InterPro" id="IPR009001">
    <property type="entry name" value="Transl_elong_EF1A/Init_IF2_C"/>
</dbReference>
<dbReference type="InterPro" id="IPR004541">
    <property type="entry name" value="Transl_elong_EFTu/EF1A_bac/org"/>
</dbReference>
<dbReference type="InterPro" id="IPR004160">
    <property type="entry name" value="Transl_elong_EFTu/EF1A_C"/>
</dbReference>
<dbReference type="NCBIfam" id="TIGR00485">
    <property type="entry name" value="EF-Tu"/>
    <property type="match status" value="1"/>
</dbReference>
<dbReference type="NCBIfam" id="NF000766">
    <property type="entry name" value="PRK00049.1"/>
    <property type="match status" value="1"/>
</dbReference>
<dbReference type="NCBIfam" id="NF009372">
    <property type="entry name" value="PRK12735.1"/>
    <property type="match status" value="1"/>
</dbReference>
<dbReference type="NCBIfam" id="NF009373">
    <property type="entry name" value="PRK12736.1"/>
    <property type="match status" value="1"/>
</dbReference>
<dbReference type="NCBIfam" id="TIGR00231">
    <property type="entry name" value="small_GTP"/>
    <property type="match status" value="1"/>
</dbReference>
<dbReference type="PANTHER" id="PTHR43721:SF22">
    <property type="entry name" value="ELONGATION FACTOR TU, MITOCHONDRIAL"/>
    <property type="match status" value="1"/>
</dbReference>
<dbReference type="PANTHER" id="PTHR43721">
    <property type="entry name" value="ELONGATION FACTOR TU-RELATED"/>
    <property type="match status" value="1"/>
</dbReference>
<dbReference type="Pfam" id="PF00009">
    <property type="entry name" value="GTP_EFTU"/>
    <property type="match status" value="1"/>
</dbReference>
<dbReference type="Pfam" id="PF03144">
    <property type="entry name" value="GTP_EFTU_D2"/>
    <property type="match status" value="1"/>
</dbReference>
<dbReference type="Pfam" id="PF03143">
    <property type="entry name" value="GTP_EFTU_D3"/>
    <property type="match status" value="1"/>
</dbReference>
<dbReference type="PRINTS" id="PR00315">
    <property type="entry name" value="ELONGATNFCT"/>
</dbReference>
<dbReference type="SUPFAM" id="SSF50465">
    <property type="entry name" value="EF-Tu/eEF-1alpha/eIF2-gamma C-terminal domain"/>
    <property type="match status" value="1"/>
</dbReference>
<dbReference type="SUPFAM" id="SSF52540">
    <property type="entry name" value="P-loop containing nucleoside triphosphate hydrolases"/>
    <property type="match status" value="1"/>
</dbReference>
<dbReference type="SUPFAM" id="SSF50447">
    <property type="entry name" value="Translation proteins"/>
    <property type="match status" value="1"/>
</dbReference>
<dbReference type="PROSITE" id="PS00301">
    <property type="entry name" value="G_TR_1"/>
    <property type="match status" value="1"/>
</dbReference>
<dbReference type="PROSITE" id="PS51722">
    <property type="entry name" value="G_TR_2"/>
    <property type="match status" value="1"/>
</dbReference>
<evidence type="ECO:0000250" key="1"/>
<evidence type="ECO:0000255" key="2">
    <source>
        <dbReference type="HAMAP-Rule" id="MF_00118"/>
    </source>
</evidence>
<reference key="1">
    <citation type="journal article" date="2009" name="BMC Genomics">
        <title>Metabolic analysis of the soil microbe Dechloromonas aromatica str. RCB: indications of a surprisingly complex life-style and cryptic anaerobic pathways for aromatic degradation.</title>
        <authorList>
            <person name="Salinero K.K."/>
            <person name="Keller K."/>
            <person name="Feil W.S."/>
            <person name="Feil H."/>
            <person name="Trong S."/>
            <person name="Di Bartolo G."/>
            <person name="Lapidus A."/>
        </authorList>
    </citation>
    <scope>NUCLEOTIDE SEQUENCE [LARGE SCALE GENOMIC DNA]</scope>
    <source>
        <strain>RCB</strain>
    </source>
</reference>
<organism>
    <name type="scientific">Dechloromonas aromatica (strain RCB)</name>
    <dbReference type="NCBI Taxonomy" id="159087"/>
    <lineage>
        <taxon>Bacteria</taxon>
        <taxon>Pseudomonadati</taxon>
        <taxon>Pseudomonadota</taxon>
        <taxon>Betaproteobacteria</taxon>
        <taxon>Rhodocyclales</taxon>
        <taxon>Azonexaceae</taxon>
        <taxon>Dechloromonas</taxon>
    </lineage>
</organism>
<proteinExistence type="inferred from homology"/>
<keyword id="KW-0963">Cytoplasm</keyword>
<keyword id="KW-0251">Elongation factor</keyword>
<keyword id="KW-0342">GTP-binding</keyword>
<keyword id="KW-0378">Hydrolase</keyword>
<keyword id="KW-0460">Magnesium</keyword>
<keyword id="KW-0479">Metal-binding</keyword>
<keyword id="KW-0547">Nucleotide-binding</keyword>
<keyword id="KW-0648">Protein biosynthesis</keyword>